<sequence>MFSLQDICRKYLFQLPDSFDEYTLQVLGLYWEKHGSLQRIRKDAVFVQRNLIISINEALRIAASEGNGRVVKLLLSWEGNFHYVIIGALEGDHYDLIHKYGSQIEDYHMILSSIHNANTFEKCHELSNCDMWCLIQNAIKYNMLPILQKHRNILTHEGENQELFEMACEEQKYDIVLWIGQTLMLNEPEFIFDIAFERIDFSLLTMGYSLLFNNKMSSIDIHDEEDLISLLTEHLEKAATKGCFFFMLETLKHGGNVNMAVLSKAVEYNHRKILDYFIRQKCLSRKDIEKLLLVAISNSASKKTLNLLLSYLNHSVKNIIGKIVQSVLKNGDFTIIIFLKKKKINLVEPALIGFINYYYSYCFLEQFIHEFDIRPEKMIKMAARKGKLNMIIEFLNEKYVHKDDLGAIFKFLKNLVCTMKHKKGKETLIVLIHKIYQVIQLETKEKFKLLRFYVMHDATIQFISMYKDCFNLAGFKPFLLECLDIAIKKNYPDMIRNIETLLKCE</sequence>
<keyword id="KW-0244">Early protein</keyword>
<keyword id="KW-1185">Reference proteome</keyword>
<accession>Q89768</accession>
<organismHost>
    <name type="scientific">Ornithodoros</name>
    <name type="common">relapsing fever ticks</name>
    <dbReference type="NCBI Taxonomy" id="6937"/>
</organismHost>
<organismHost>
    <name type="scientific">Sus scrofa</name>
    <name type="common">Pig</name>
    <dbReference type="NCBI Taxonomy" id="9823"/>
</organismHost>
<proteinExistence type="evidence at transcript level"/>
<name>5054R_ASFB7</name>
<comment type="function">
    <text evidence="1">Plays a role in virus cell tropism, and may be required for efficient virus replication in macrophages.</text>
</comment>
<comment type="induction">
    <text evidence="2">Expressed in the early phase of the viral replicative cycle.</text>
</comment>
<comment type="similarity">
    <text evidence="3">Belongs to the asfivirus MGF 505 family.</text>
</comment>
<protein>
    <recommendedName>
        <fullName>Protein MGF 505-4R</fullName>
    </recommendedName>
</protein>
<reference key="1">
    <citation type="journal article" date="1995" name="Virology">
        <title>Analysis of the complete nucleotide sequence of African swine fever virus.</title>
        <authorList>
            <person name="Yanez R.J."/>
            <person name="Rodriguez J.M."/>
            <person name="Nogal M.L."/>
            <person name="Yuste L."/>
            <person name="Enriquez C."/>
            <person name="Rodriguez J.F."/>
            <person name="Vinuela E."/>
        </authorList>
    </citation>
    <scope>NUCLEOTIDE SEQUENCE [LARGE SCALE GENOMIC DNA]</scope>
</reference>
<reference key="2">
    <citation type="journal article" date="2001" name="J. Virol.">
        <title>African swine fever virus multigene family 360 and 530 genes are novel macrophage host range determinants.</title>
        <authorList>
            <person name="Zsak L."/>
            <person name="Lu Z."/>
            <person name="Burrage T.G."/>
            <person name="Neilan J.G."/>
            <person name="Kutish G.F."/>
            <person name="Moore D.M."/>
            <person name="Rock D.L."/>
        </authorList>
    </citation>
    <scope>FUNCTION</scope>
</reference>
<reference key="3">
    <citation type="journal article" date="2020" name="J. Virol.">
        <title>The African Swine Fever Virus Transcriptome.</title>
        <authorList>
            <person name="Cackett G."/>
            <person name="Matelska D."/>
            <person name="Sykora M."/>
            <person name="Portugal R."/>
            <person name="Malecki M."/>
            <person name="Baehler J."/>
            <person name="Dixon L."/>
            <person name="Werner F."/>
        </authorList>
    </citation>
    <scope>INDUCTION</scope>
</reference>
<dbReference type="EMBL" id="U02468">
    <property type="protein sequence ID" value="AAA17787.1"/>
    <property type="molecule type" value="Genomic_DNA"/>
</dbReference>
<dbReference type="EMBL" id="U18466">
    <property type="protein sequence ID" value="AAA65258.1"/>
    <property type="molecule type" value="Genomic_DNA"/>
</dbReference>
<dbReference type="RefSeq" id="NP_042722.1">
    <property type="nucleotide sequence ID" value="NC_001659.2"/>
</dbReference>
<dbReference type="SMR" id="Q89768"/>
<dbReference type="GeneID" id="22220410"/>
<dbReference type="KEGG" id="vg:22220410"/>
<dbReference type="Proteomes" id="UP000000624">
    <property type="component" value="Segment"/>
</dbReference>
<dbReference type="InterPro" id="IPR004858">
    <property type="entry name" value="MGF_505"/>
</dbReference>
<dbReference type="Pfam" id="PF03158">
    <property type="entry name" value="DUF249"/>
    <property type="match status" value="1"/>
</dbReference>
<evidence type="ECO:0000269" key="1">
    <source>
    </source>
</evidence>
<evidence type="ECO:0000269" key="2">
    <source>
    </source>
</evidence>
<evidence type="ECO:0000305" key="3"/>
<gene>
    <name type="ordered locus">BA71R-027</name>
    <name type="ORF">A505R</name>
</gene>
<organism>
    <name type="scientific">African swine fever virus (strain Badajoz 1971 Vero-adapted)</name>
    <name type="common">Ba71V</name>
    <name type="synonym">ASFV</name>
    <dbReference type="NCBI Taxonomy" id="10498"/>
    <lineage>
        <taxon>Viruses</taxon>
        <taxon>Varidnaviria</taxon>
        <taxon>Bamfordvirae</taxon>
        <taxon>Nucleocytoviricota</taxon>
        <taxon>Pokkesviricetes</taxon>
        <taxon>Asfuvirales</taxon>
        <taxon>Asfarviridae</taxon>
        <taxon>Asfivirus</taxon>
        <taxon>African swine fever virus</taxon>
    </lineage>
</organism>
<feature type="chain" id="PRO_0000373327" description="Protein MGF 505-4R">
    <location>
        <begin position="1"/>
        <end position="505"/>
    </location>
</feature>